<name>RS18_CHRVO</name>
<feature type="chain" id="PRO_0000111143" description="Small ribosomal subunit protein bS18">
    <location>
        <begin position="1"/>
        <end position="75"/>
    </location>
</feature>
<gene>
    <name evidence="1" type="primary">rpsR</name>
    <name type="ordered locus">CV_3638</name>
</gene>
<proteinExistence type="inferred from homology"/>
<evidence type="ECO:0000255" key="1">
    <source>
        <dbReference type="HAMAP-Rule" id="MF_00270"/>
    </source>
</evidence>
<evidence type="ECO:0000305" key="2"/>
<reference key="1">
    <citation type="journal article" date="2003" name="Proc. Natl. Acad. Sci. U.S.A.">
        <title>The complete genome sequence of Chromobacterium violaceum reveals remarkable and exploitable bacterial adaptability.</title>
        <authorList>
            <person name="Vasconcelos A.T.R."/>
            <person name="de Almeida D.F."/>
            <person name="Hungria M."/>
            <person name="Guimaraes C.T."/>
            <person name="Antonio R.V."/>
            <person name="Almeida F.C."/>
            <person name="de Almeida L.G.P."/>
            <person name="de Almeida R."/>
            <person name="Alves-Gomes J.A."/>
            <person name="Andrade E.M."/>
            <person name="Araripe J."/>
            <person name="de Araujo M.F.F."/>
            <person name="Astolfi-Filho S."/>
            <person name="Azevedo V."/>
            <person name="Baptista A.J."/>
            <person name="Bataus L.A.M."/>
            <person name="Batista J.S."/>
            <person name="Belo A."/>
            <person name="van den Berg C."/>
            <person name="Bogo M."/>
            <person name="Bonatto S."/>
            <person name="Bordignon J."/>
            <person name="Brigido M.M."/>
            <person name="Brito C.A."/>
            <person name="Brocchi M."/>
            <person name="Burity H.A."/>
            <person name="Camargo A.A."/>
            <person name="Cardoso D.D.P."/>
            <person name="Carneiro N.P."/>
            <person name="Carraro D.M."/>
            <person name="Carvalho C.M.B."/>
            <person name="Cascardo J.C.M."/>
            <person name="Cavada B.S."/>
            <person name="Chueire L.M.O."/>
            <person name="Creczynski-Pasa T.B."/>
            <person name="Cunha-Junior N.C."/>
            <person name="Fagundes N."/>
            <person name="Falcao C.L."/>
            <person name="Fantinatti F."/>
            <person name="Farias I.P."/>
            <person name="Felipe M.S.S."/>
            <person name="Ferrari L.P."/>
            <person name="Ferro J.A."/>
            <person name="Ferro M.I.T."/>
            <person name="Franco G.R."/>
            <person name="Freitas N.S.A."/>
            <person name="Furlan L.R."/>
            <person name="Gazzinelli R.T."/>
            <person name="Gomes E.A."/>
            <person name="Goncalves P.R."/>
            <person name="Grangeiro T.B."/>
            <person name="Grattapaglia D."/>
            <person name="Grisard E.C."/>
            <person name="Hanna E.S."/>
            <person name="Jardim S.N."/>
            <person name="Laurino J."/>
            <person name="Leoi L.C.T."/>
            <person name="Lima L.F.A."/>
            <person name="Loureiro M.F."/>
            <person name="Lyra M.C.C.P."/>
            <person name="Madeira H.M.F."/>
            <person name="Manfio G.P."/>
            <person name="Maranhao A.Q."/>
            <person name="Martins W.S."/>
            <person name="di Mauro S.M.Z."/>
            <person name="de Medeiros S.R.B."/>
            <person name="Meissner R.V."/>
            <person name="Moreira M.A.M."/>
            <person name="Nascimento F.F."/>
            <person name="Nicolas M.F."/>
            <person name="Oliveira J.G."/>
            <person name="Oliveira S.C."/>
            <person name="Paixao R.F.C."/>
            <person name="Parente J.A."/>
            <person name="Pedrosa F.O."/>
            <person name="Pena S.D.J."/>
            <person name="Pereira J.O."/>
            <person name="Pereira M."/>
            <person name="Pinto L.S.R.C."/>
            <person name="Pinto L.S."/>
            <person name="Porto J.I.R."/>
            <person name="Potrich D.P."/>
            <person name="Ramalho-Neto C.E."/>
            <person name="Reis A.M.M."/>
            <person name="Rigo L.U."/>
            <person name="Rondinelli E."/>
            <person name="Santos E.B.P."/>
            <person name="Santos F.R."/>
            <person name="Schneider M.P.C."/>
            <person name="Seuanez H.N."/>
            <person name="Silva A.M.R."/>
            <person name="da Silva A.L.C."/>
            <person name="Silva D.W."/>
            <person name="Silva R."/>
            <person name="Simoes I.C."/>
            <person name="Simon D."/>
            <person name="Soares C.M.A."/>
            <person name="Soares R.B.A."/>
            <person name="Souza E.M."/>
            <person name="Souza K.R.L."/>
            <person name="Souza R.C."/>
            <person name="Steffens M.B.R."/>
            <person name="Steindel M."/>
            <person name="Teixeira S.R."/>
            <person name="Urmenyi T."/>
            <person name="Vettore A."/>
            <person name="Wassem R."/>
            <person name="Zaha A."/>
            <person name="Simpson A.J.G."/>
        </authorList>
    </citation>
    <scope>NUCLEOTIDE SEQUENCE [LARGE SCALE GENOMIC DNA]</scope>
    <source>
        <strain>ATCC 12472 / DSM 30191 / JCM 1249 / CCUG 213 / NBRC 12614 / NCIMB 9131 / NCTC 9757 / MK</strain>
    </source>
</reference>
<protein>
    <recommendedName>
        <fullName evidence="1">Small ribosomal subunit protein bS18</fullName>
    </recommendedName>
    <alternativeName>
        <fullName evidence="2">30S ribosomal protein S18</fullName>
    </alternativeName>
</protein>
<keyword id="KW-1185">Reference proteome</keyword>
<keyword id="KW-0687">Ribonucleoprotein</keyword>
<keyword id="KW-0689">Ribosomal protein</keyword>
<keyword id="KW-0694">RNA-binding</keyword>
<keyword id="KW-0699">rRNA-binding</keyword>
<accession>Q7NRY9</accession>
<sequence>MARQLFKRKKFCRFTAEGIKEIDYKSVDLLKDFIAENGKIIPARITGTKARYQRQLTTAIKRARFLAFLPYTDQH</sequence>
<organism>
    <name type="scientific">Chromobacterium violaceum (strain ATCC 12472 / DSM 30191 / JCM 1249 / CCUG 213 / NBRC 12614 / NCIMB 9131 / NCTC 9757 / MK)</name>
    <dbReference type="NCBI Taxonomy" id="243365"/>
    <lineage>
        <taxon>Bacteria</taxon>
        <taxon>Pseudomonadati</taxon>
        <taxon>Pseudomonadota</taxon>
        <taxon>Betaproteobacteria</taxon>
        <taxon>Neisseriales</taxon>
        <taxon>Chromobacteriaceae</taxon>
        <taxon>Chromobacterium</taxon>
    </lineage>
</organism>
<comment type="function">
    <text evidence="1">Binds as a heterodimer with protein bS6 to the central domain of the 16S rRNA, where it helps stabilize the platform of the 30S subunit.</text>
</comment>
<comment type="subunit">
    <text evidence="1">Part of the 30S ribosomal subunit. Forms a tight heterodimer with protein bS6.</text>
</comment>
<comment type="similarity">
    <text evidence="1">Belongs to the bacterial ribosomal protein bS18 family.</text>
</comment>
<dbReference type="EMBL" id="AE016825">
    <property type="protein sequence ID" value="AAQ61300.1"/>
    <property type="molecule type" value="Genomic_DNA"/>
</dbReference>
<dbReference type="RefSeq" id="WP_011137185.1">
    <property type="nucleotide sequence ID" value="NC_005085.1"/>
</dbReference>
<dbReference type="SMR" id="Q7NRY9"/>
<dbReference type="STRING" id="243365.CV_3638"/>
<dbReference type="GeneID" id="97480607"/>
<dbReference type="KEGG" id="cvi:CV_3638"/>
<dbReference type="eggNOG" id="COG0238">
    <property type="taxonomic scope" value="Bacteria"/>
</dbReference>
<dbReference type="HOGENOM" id="CLU_148710_2_2_4"/>
<dbReference type="OrthoDB" id="9812008at2"/>
<dbReference type="Proteomes" id="UP000001424">
    <property type="component" value="Chromosome"/>
</dbReference>
<dbReference type="GO" id="GO:0022627">
    <property type="term" value="C:cytosolic small ribosomal subunit"/>
    <property type="evidence" value="ECO:0007669"/>
    <property type="project" value="TreeGrafter"/>
</dbReference>
<dbReference type="GO" id="GO:0070181">
    <property type="term" value="F:small ribosomal subunit rRNA binding"/>
    <property type="evidence" value="ECO:0007669"/>
    <property type="project" value="TreeGrafter"/>
</dbReference>
<dbReference type="GO" id="GO:0003735">
    <property type="term" value="F:structural constituent of ribosome"/>
    <property type="evidence" value="ECO:0007669"/>
    <property type="project" value="InterPro"/>
</dbReference>
<dbReference type="GO" id="GO:0006412">
    <property type="term" value="P:translation"/>
    <property type="evidence" value="ECO:0007669"/>
    <property type="project" value="UniProtKB-UniRule"/>
</dbReference>
<dbReference type="FunFam" id="4.10.640.10:FF:000001">
    <property type="entry name" value="30S ribosomal protein S18"/>
    <property type="match status" value="1"/>
</dbReference>
<dbReference type="Gene3D" id="4.10.640.10">
    <property type="entry name" value="Ribosomal protein S18"/>
    <property type="match status" value="1"/>
</dbReference>
<dbReference type="HAMAP" id="MF_00270">
    <property type="entry name" value="Ribosomal_bS18"/>
    <property type="match status" value="1"/>
</dbReference>
<dbReference type="InterPro" id="IPR001648">
    <property type="entry name" value="Ribosomal_bS18"/>
</dbReference>
<dbReference type="InterPro" id="IPR036870">
    <property type="entry name" value="Ribosomal_bS18_sf"/>
</dbReference>
<dbReference type="NCBIfam" id="TIGR00165">
    <property type="entry name" value="S18"/>
    <property type="match status" value="1"/>
</dbReference>
<dbReference type="PANTHER" id="PTHR13479">
    <property type="entry name" value="30S RIBOSOMAL PROTEIN S18"/>
    <property type="match status" value="1"/>
</dbReference>
<dbReference type="PANTHER" id="PTHR13479:SF40">
    <property type="entry name" value="SMALL RIBOSOMAL SUBUNIT PROTEIN BS18M"/>
    <property type="match status" value="1"/>
</dbReference>
<dbReference type="Pfam" id="PF01084">
    <property type="entry name" value="Ribosomal_S18"/>
    <property type="match status" value="1"/>
</dbReference>
<dbReference type="PRINTS" id="PR00974">
    <property type="entry name" value="RIBOSOMALS18"/>
</dbReference>
<dbReference type="SUPFAM" id="SSF46911">
    <property type="entry name" value="Ribosomal protein S18"/>
    <property type="match status" value="1"/>
</dbReference>